<accession>B4S591</accession>
<proteinExistence type="inferred from homology"/>
<organism>
    <name type="scientific">Prosthecochloris aestuarii (strain DSM 271 / SK 413)</name>
    <dbReference type="NCBI Taxonomy" id="290512"/>
    <lineage>
        <taxon>Bacteria</taxon>
        <taxon>Pseudomonadati</taxon>
        <taxon>Chlorobiota</taxon>
        <taxon>Chlorobiia</taxon>
        <taxon>Chlorobiales</taxon>
        <taxon>Chlorobiaceae</taxon>
        <taxon>Prosthecochloris</taxon>
    </lineage>
</organism>
<keyword id="KW-0004">4Fe-4S</keyword>
<keyword id="KW-0067">ATP-binding</keyword>
<keyword id="KW-0077">Bacteriochlorophyll biosynthesis</keyword>
<keyword id="KW-0149">Chlorophyll biosynthesis</keyword>
<keyword id="KW-0408">Iron</keyword>
<keyword id="KW-0411">Iron-sulfur</keyword>
<keyword id="KW-0460">Magnesium</keyword>
<keyword id="KW-0479">Metal-binding</keyword>
<keyword id="KW-0547">Nucleotide-binding</keyword>
<keyword id="KW-0560">Oxidoreductase</keyword>
<keyword id="KW-0602">Photosynthesis</keyword>
<sequence length="275" mass="29618">MSLILAVYGKGGIGKSTTTANISAALALQGAKVLQIGCDPKHDSTFPLTGTLQKTVIEALDEVDFHHEELEKEDIIETGFAGIDALEAGGPPAGSGCGGYVVGEAVKLLQELGLYDQYDVILFDVLGDVVCGGFSAPLNYADYAVIIATNDFDSIFAANRLCMAIQQKSVRYKVKLAGIVANRVDYVKGGGTNMLEQFSEKVGTKLLARVPYHELIRKSRFAGKTMFQMEDGPEKDECLKPYNEIAEFLLSENPSASVPVPIGDRDIFEIVGGWQ</sequence>
<reference key="1">
    <citation type="submission" date="2008-06" db="EMBL/GenBank/DDBJ databases">
        <title>Complete sequence of chromosome of Prosthecochloris aestuarii DSM 271.</title>
        <authorList>
            <consortium name="US DOE Joint Genome Institute"/>
            <person name="Lucas S."/>
            <person name="Copeland A."/>
            <person name="Lapidus A."/>
            <person name="Glavina del Rio T."/>
            <person name="Dalin E."/>
            <person name="Tice H."/>
            <person name="Bruce D."/>
            <person name="Goodwin L."/>
            <person name="Pitluck S."/>
            <person name="Schmutz J."/>
            <person name="Larimer F."/>
            <person name="Land M."/>
            <person name="Hauser L."/>
            <person name="Kyrpides N."/>
            <person name="Anderson I."/>
            <person name="Liu Z."/>
            <person name="Li T."/>
            <person name="Zhao F."/>
            <person name="Overmann J."/>
            <person name="Bryant D.A."/>
            <person name="Richardson P."/>
        </authorList>
    </citation>
    <scope>NUCLEOTIDE SEQUENCE [LARGE SCALE GENOMIC DNA]</scope>
    <source>
        <strain>DSM 271 / SK 413</strain>
    </source>
</reference>
<feature type="chain" id="PRO_1000120559" description="Light-independent protochlorophyllide reductase iron-sulfur ATP-binding protein">
    <location>
        <begin position="1"/>
        <end position="275"/>
    </location>
</feature>
<feature type="binding site" evidence="1">
    <location>
        <begin position="12"/>
        <end position="17"/>
    </location>
    <ligand>
        <name>ATP</name>
        <dbReference type="ChEBI" id="CHEBI:30616"/>
    </ligand>
</feature>
<feature type="binding site" evidence="1">
    <location>
        <position position="16"/>
    </location>
    <ligand>
        <name>Mg(2+)</name>
        <dbReference type="ChEBI" id="CHEBI:18420"/>
    </ligand>
</feature>
<feature type="binding site" evidence="1">
    <location>
        <position position="41"/>
    </location>
    <ligand>
        <name>ATP</name>
        <dbReference type="ChEBI" id="CHEBI:30616"/>
    </ligand>
</feature>
<feature type="binding site" evidence="1">
    <location>
        <position position="97"/>
    </location>
    <ligand>
        <name>[4Fe-4S] cluster</name>
        <dbReference type="ChEBI" id="CHEBI:49883"/>
        <note>ligand shared between dimeric partners</note>
    </ligand>
</feature>
<feature type="binding site" evidence="1">
    <location>
        <position position="131"/>
    </location>
    <ligand>
        <name>[4Fe-4S] cluster</name>
        <dbReference type="ChEBI" id="CHEBI:49883"/>
        <note>ligand shared between dimeric partners</note>
    </ligand>
</feature>
<feature type="binding site" evidence="1">
    <location>
        <begin position="182"/>
        <end position="183"/>
    </location>
    <ligand>
        <name>ATP</name>
        <dbReference type="ChEBI" id="CHEBI:30616"/>
    </ligand>
</feature>
<name>BCHL_PROA2</name>
<protein>
    <recommendedName>
        <fullName evidence="1">Light-independent protochlorophyllide reductase iron-sulfur ATP-binding protein</fullName>
        <shortName evidence="1">DPOR subunit L</shortName>
        <shortName evidence="1">LI-POR subunit L</shortName>
        <ecNumber evidence="1">1.3.7.7</ecNumber>
    </recommendedName>
</protein>
<gene>
    <name evidence="1" type="primary">bchL</name>
    <name type="ordered locus">Paes_2027</name>
</gene>
<evidence type="ECO:0000255" key="1">
    <source>
        <dbReference type="HAMAP-Rule" id="MF_00355"/>
    </source>
</evidence>
<dbReference type="EC" id="1.3.7.7" evidence="1"/>
<dbReference type="EMBL" id="CP001108">
    <property type="protein sequence ID" value="ACF47037.1"/>
    <property type="molecule type" value="Genomic_DNA"/>
</dbReference>
<dbReference type="RefSeq" id="WP_012506570.1">
    <property type="nucleotide sequence ID" value="NC_011059.1"/>
</dbReference>
<dbReference type="SMR" id="B4S591"/>
<dbReference type="STRING" id="290512.Paes_2027"/>
<dbReference type="KEGG" id="paa:Paes_2027"/>
<dbReference type="eggNOG" id="COG1348">
    <property type="taxonomic scope" value="Bacteria"/>
</dbReference>
<dbReference type="HOGENOM" id="CLU_059373_2_0_10"/>
<dbReference type="UniPathway" id="UPA00671"/>
<dbReference type="Proteomes" id="UP000002725">
    <property type="component" value="Chromosome"/>
</dbReference>
<dbReference type="GO" id="GO:0051539">
    <property type="term" value="F:4 iron, 4 sulfur cluster binding"/>
    <property type="evidence" value="ECO:0007669"/>
    <property type="project" value="UniProtKB-UniRule"/>
</dbReference>
<dbReference type="GO" id="GO:0005524">
    <property type="term" value="F:ATP binding"/>
    <property type="evidence" value="ECO:0007669"/>
    <property type="project" value="UniProtKB-UniRule"/>
</dbReference>
<dbReference type="GO" id="GO:0046872">
    <property type="term" value="F:metal ion binding"/>
    <property type="evidence" value="ECO:0007669"/>
    <property type="project" value="UniProtKB-KW"/>
</dbReference>
<dbReference type="GO" id="GO:0016730">
    <property type="term" value="F:oxidoreductase activity, acting on iron-sulfur proteins as donors"/>
    <property type="evidence" value="ECO:0007669"/>
    <property type="project" value="InterPro"/>
</dbReference>
<dbReference type="GO" id="GO:0016636">
    <property type="term" value="F:oxidoreductase activity, acting on the CH-CH group of donors, iron-sulfur protein as acceptor"/>
    <property type="evidence" value="ECO:0007669"/>
    <property type="project" value="UniProtKB-UniRule"/>
</dbReference>
<dbReference type="GO" id="GO:0036070">
    <property type="term" value="P:light-independent bacteriochlorophyll biosynthetic process"/>
    <property type="evidence" value="ECO:0007669"/>
    <property type="project" value="UniProtKB-UniRule"/>
</dbReference>
<dbReference type="GO" id="GO:0019685">
    <property type="term" value="P:photosynthesis, dark reaction"/>
    <property type="evidence" value="ECO:0007669"/>
    <property type="project" value="InterPro"/>
</dbReference>
<dbReference type="Gene3D" id="3.40.50.300">
    <property type="entry name" value="P-loop containing nucleotide triphosphate hydrolases"/>
    <property type="match status" value="1"/>
</dbReference>
<dbReference type="HAMAP" id="MF_00355">
    <property type="entry name" value="ChlL_BchL"/>
    <property type="match status" value="1"/>
</dbReference>
<dbReference type="InterPro" id="IPR030655">
    <property type="entry name" value="NifH/chlL_CS"/>
</dbReference>
<dbReference type="InterPro" id="IPR000392">
    <property type="entry name" value="NifH/frxC"/>
</dbReference>
<dbReference type="InterPro" id="IPR027417">
    <property type="entry name" value="P-loop_NTPase"/>
</dbReference>
<dbReference type="InterPro" id="IPR005971">
    <property type="entry name" value="Protochlorophyllide_ATP-bd"/>
</dbReference>
<dbReference type="NCBIfam" id="TIGR01281">
    <property type="entry name" value="DPOR_bchL"/>
    <property type="match status" value="1"/>
</dbReference>
<dbReference type="PANTHER" id="PTHR42864">
    <property type="entry name" value="LIGHT-INDEPENDENT PROTOCHLOROPHYLLIDE REDUCTASE IRON-SULFUR ATP-BINDING PROTEIN"/>
    <property type="match status" value="1"/>
</dbReference>
<dbReference type="PANTHER" id="PTHR42864:SF2">
    <property type="entry name" value="LIGHT-INDEPENDENT PROTOCHLOROPHYLLIDE REDUCTASE IRON-SULFUR ATP-BINDING PROTEIN"/>
    <property type="match status" value="1"/>
</dbReference>
<dbReference type="Pfam" id="PF00142">
    <property type="entry name" value="Fer4_NifH"/>
    <property type="match status" value="1"/>
</dbReference>
<dbReference type="PIRSF" id="PIRSF000363">
    <property type="entry name" value="Nitrogenase_iron"/>
    <property type="match status" value="1"/>
</dbReference>
<dbReference type="PRINTS" id="PR00091">
    <property type="entry name" value="NITROGNASEII"/>
</dbReference>
<dbReference type="SUPFAM" id="SSF52540">
    <property type="entry name" value="P-loop containing nucleoside triphosphate hydrolases"/>
    <property type="match status" value="1"/>
</dbReference>
<dbReference type="PROSITE" id="PS00746">
    <property type="entry name" value="NIFH_FRXC_1"/>
    <property type="match status" value="1"/>
</dbReference>
<dbReference type="PROSITE" id="PS00692">
    <property type="entry name" value="NIFH_FRXC_2"/>
    <property type="match status" value="1"/>
</dbReference>
<dbReference type="PROSITE" id="PS51026">
    <property type="entry name" value="NIFH_FRXC_3"/>
    <property type="match status" value="1"/>
</dbReference>
<comment type="function">
    <text evidence="1">Component of the dark-operative protochlorophyllide reductase (DPOR) that uses Mg-ATP and reduced ferredoxin to reduce ring D of protochlorophyllide (Pchlide) to form chlorophyllide a (Chlide). This reaction is light-independent. The L component serves as a unique electron donor to the NB-component of the complex, and binds Mg-ATP.</text>
</comment>
<comment type="catalytic activity">
    <reaction evidence="1">
        <text>chlorophyllide a + oxidized 2[4Fe-4S]-[ferredoxin] + 2 ADP + 2 phosphate = protochlorophyllide a + reduced 2[4Fe-4S]-[ferredoxin] + 2 ATP + 2 H2O</text>
        <dbReference type="Rhea" id="RHEA:28202"/>
        <dbReference type="Rhea" id="RHEA-COMP:10002"/>
        <dbReference type="Rhea" id="RHEA-COMP:10004"/>
        <dbReference type="ChEBI" id="CHEBI:15377"/>
        <dbReference type="ChEBI" id="CHEBI:30616"/>
        <dbReference type="ChEBI" id="CHEBI:33722"/>
        <dbReference type="ChEBI" id="CHEBI:33723"/>
        <dbReference type="ChEBI" id="CHEBI:43474"/>
        <dbReference type="ChEBI" id="CHEBI:83348"/>
        <dbReference type="ChEBI" id="CHEBI:83350"/>
        <dbReference type="ChEBI" id="CHEBI:456216"/>
        <dbReference type="EC" id="1.3.7.7"/>
    </reaction>
</comment>
<comment type="cofactor">
    <cofactor evidence="1">
        <name>[4Fe-4S] cluster</name>
        <dbReference type="ChEBI" id="CHEBI:49883"/>
    </cofactor>
    <text evidence="1">Binds 1 [4Fe-4S] cluster per dimer.</text>
</comment>
<comment type="pathway">
    <text evidence="1">Porphyrin-containing compound metabolism; bacteriochlorophyll biosynthesis (light-independent).</text>
</comment>
<comment type="subunit">
    <text evidence="1">Homodimer. Protochlorophyllide reductase is composed of three subunits; BchL, BchN and BchB.</text>
</comment>
<comment type="similarity">
    <text evidence="1">Belongs to the NifH/BchL/ChlL family.</text>
</comment>